<comment type="function">
    <text evidence="1">Peptide chain release factor 1 directs the termination of translation in response to the peptide chain termination codons UAG and UAA.</text>
</comment>
<comment type="subcellular location">
    <subcellularLocation>
        <location evidence="1">Cytoplasm</location>
    </subcellularLocation>
</comment>
<comment type="PTM">
    <text evidence="1">Methylated by PrmC. Methylation increases the termination efficiency of RF1.</text>
</comment>
<comment type="similarity">
    <text evidence="1">Belongs to the prokaryotic/mitochondrial release factor family.</text>
</comment>
<accession>Q65DV1</accession>
<accession>Q62PC3</accession>
<dbReference type="EMBL" id="CP000002">
    <property type="protein sequence ID" value="AAU25388.1"/>
    <property type="molecule type" value="Genomic_DNA"/>
</dbReference>
<dbReference type="EMBL" id="AE017333">
    <property type="protein sequence ID" value="AAU42763.1"/>
    <property type="molecule type" value="Genomic_DNA"/>
</dbReference>
<dbReference type="RefSeq" id="WP_003186043.1">
    <property type="nucleotide sequence ID" value="NC_006322.1"/>
</dbReference>
<dbReference type="SMR" id="Q65DV1"/>
<dbReference type="STRING" id="279010.BL03978"/>
<dbReference type="GeneID" id="92859478"/>
<dbReference type="KEGG" id="bld:BLi03949"/>
<dbReference type="KEGG" id="bli:BL03978"/>
<dbReference type="eggNOG" id="COG0216">
    <property type="taxonomic scope" value="Bacteria"/>
</dbReference>
<dbReference type="HOGENOM" id="CLU_036856_0_1_9"/>
<dbReference type="Proteomes" id="UP000000606">
    <property type="component" value="Chromosome"/>
</dbReference>
<dbReference type="GO" id="GO:0005737">
    <property type="term" value="C:cytoplasm"/>
    <property type="evidence" value="ECO:0007669"/>
    <property type="project" value="UniProtKB-SubCell"/>
</dbReference>
<dbReference type="GO" id="GO:0016149">
    <property type="term" value="F:translation release factor activity, codon specific"/>
    <property type="evidence" value="ECO:0007669"/>
    <property type="project" value="UniProtKB-UniRule"/>
</dbReference>
<dbReference type="FunFam" id="3.30.160.20:FF:000004">
    <property type="entry name" value="Peptide chain release factor 1"/>
    <property type="match status" value="1"/>
</dbReference>
<dbReference type="FunFam" id="3.30.70.1660:FF:000002">
    <property type="entry name" value="Peptide chain release factor 1"/>
    <property type="match status" value="1"/>
</dbReference>
<dbReference type="FunFam" id="3.30.70.1660:FF:000004">
    <property type="entry name" value="Peptide chain release factor 1"/>
    <property type="match status" value="1"/>
</dbReference>
<dbReference type="Gene3D" id="3.30.160.20">
    <property type="match status" value="1"/>
</dbReference>
<dbReference type="Gene3D" id="3.30.70.1660">
    <property type="match status" value="1"/>
</dbReference>
<dbReference type="Gene3D" id="6.10.140.1950">
    <property type="match status" value="1"/>
</dbReference>
<dbReference type="HAMAP" id="MF_00093">
    <property type="entry name" value="Rel_fac_1"/>
    <property type="match status" value="1"/>
</dbReference>
<dbReference type="InterPro" id="IPR005139">
    <property type="entry name" value="PCRF"/>
</dbReference>
<dbReference type="InterPro" id="IPR000352">
    <property type="entry name" value="Pep_chain_release_fac_I"/>
</dbReference>
<dbReference type="InterPro" id="IPR045853">
    <property type="entry name" value="Pep_chain_release_fac_I_sf"/>
</dbReference>
<dbReference type="InterPro" id="IPR050057">
    <property type="entry name" value="Prokaryotic/Mito_RF"/>
</dbReference>
<dbReference type="InterPro" id="IPR004373">
    <property type="entry name" value="RF-1"/>
</dbReference>
<dbReference type="NCBIfam" id="TIGR00019">
    <property type="entry name" value="prfA"/>
    <property type="match status" value="1"/>
</dbReference>
<dbReference type="NCBIfam" id="NF001859">
    <property type="entry name" value="PRK00591.1"/>
    <property type="match status" value="1"/>
</dbReference>
<dbReference type="PANTHER" id="PTHR43804">
    <property type="entry name" value="LD18447P"/>
    <property type="match status" value="1"/>
</dbReference>
<dbReference type="PANTHER" id="PTHR43804:SF7">
    <property type="entry name" value="LD18447P"/>
    <property type="match status" value="1"/>
</dbReference>
<dbReference type="Pfam" id="PF03462">
    <property type="entry name" value="PCRF"/>
    <property type="match status" value="1"/>
</dbReference>
<dbReference type="Pfam" id="PF00472">
    <property type="entry name" value="RF-1"/>
    <property type="match status" value="1"/>
</dbReference>
<dbReference type="SMART" id="SM00937">
    <property type="entry name" value="PCRF"/>
    <property type="match status" value="1"/>
</dbReference>
<dbReference type="SUPFAM" id="SSF75620">
    <property type="entry name" value="Release factor"/>
    <property type="match status" value="1"/>
</dbReference>
<dbReference type="PROSITE" id="PS00745">
    <property type="entry name" value="RF_PROK_I"/>
    <property type="match status" value="1"/>
</dbReference>
<reference key="1">
    <citation type="journal article" date="2004" name="J. Mol. Microbiol. Biotechnol.">
        <title>The complete genome sequence of Bacillus licheniformis DSM13, an organism with great industrial potential.</title>
        <authorList>
            <person name="Veith B."/>
            <person name="Herzberg C."/>
            <person name="Steckel S."/>
            <person name="Feesche J."/>
            <person name="Maurer K.H."/>
            <person name="Ehrenreich P."/>
            <person name="Baeumer S."/>
            <person name="Henne A."/>
            <person name="Liesegang H."/>
            <person name="Merkl R."/>
            <person name="Ehrenreich A."/>
            <person name="Gottschalk G."/>
        </authorList>
    </citation>
    <scope>NUCLEOTIDE SEQUENCE [LARGE SCALE GENOMIC DNA]</scope>
    <source>
        <strain>ATCC 14580 / DSM 13 / JCM 2505 / CCUG 7422 / NBRC 12200 / NCIMB 9375 / NCTC 10341 / NRRL NRS-1264 / Gibson 46</strain>
    </source>
</reference>
<reference key="2">
    <citation type="journal article" date="2004" name="Genome Biol.">
        <title>Complete genome sequence of the industrial bacterium Bacillus licheniformis and comparisons with closely related Bacillus species.</title>
        <authorList>
            <person name="Rey M.W."/>
            <person name="Ramaiya P."/>
            <person name="Nelson B.A."/>
            <person name="Brody-Karpin S.D."/>
            <person name="Zaretsky E.J."/>
            <person name="Tang M."/>
            <person name="Lopez de Leon A."/>
            <person name="Xiang H."/>
            <person name="Gusti V."/>
            <person name="Clausen I.G."/>
            <person name="Olsen P.B."/>
            <person name="Rasmussen M.D."/>
            <person name="Andersen J.T."/>
            <person name="Joergensen P.L."/>
            <person name="Larsen T.S."/>
            <person name="Sorokin A."/>
            <person name="Bolotin A."/>
            <person name="Lapidus A."/>
            <person name="Galleron N."/>
            <person name="Ehrlich S.D."/>
            <person name="Berka R.M."/>
        </authorList>
    </citation>
    <scope>NUCLEOTIDE SEQUENCE [LARGE SCALE GENOMIC DNA]</scope>
    <source>
        <strain>ATCC 14580 / DSM 13 / JCM 2505 / CCUG 7422 / NBRC 12200 / NCIMB 9375 / NCTC 10341 / NRRL NRS-1264 / Gibson 46</strain>
    </source>
</reference>
<gene>
    <name evidence="1" type="primary">prfA</name>
    <name type="ordered locus">BLi03949</name>
    <name type="ordered locus">BL03978</name>
</gene>
<proteinExistence type="inferred from homology"/>
<keyword id="KW-0963">Cytoplasm</keyword>
<keyword id="KW-0488">Methylation</keyword>
<keyword id="KW-0648">Protein biosynthesis</keyword>
<keyword id="KW-1185">Reference proteome</keyword>
<name>RF1_BACLD</name>
<organism>
    <name type="scientific">Bacillus licheniformis (strain ATCC 14580 / DSM 13 / JCM 2505 / CCUG 7422 / NBRC 12200 / NCIMB 9375 / NCTC 10341 / NRRL NRS-1264 / Gibson 46)</name>
    <dbReference type="NCBI Taxonomy" id="279010"/>
    <lineage>
        <taxon>Bacteria</taxon>
        <taxon>Bacillati</taxon>
        <taxon>Bacillota</taxon>
        <taxon>Bacilli</taxon>
        <taxon>Bacillales</taxon>
        <taxon>Bacillaceae</taxon>
        <taxon>Bacillus</taxon>
    </lineage>
</organism>
<evidence type="ECO:0000255" key="1">
    <source>
        <dbReference type="HAMAP-Rule" id="MF_00093"/>
    </source>
</evidence>
<feature type="chain" id="PRO_0000263234" description="Peptide chain release factor 1">
    <location>
        <begin position="1"/>
        <end position="356"/>
    </location>
</feature>
<feature type="modified residue" description="N5-methylglutamine" evidence="1">
    <location>
        <position position="233"/>
    </location>
</feature>
<sequence>MLDRLKSIEDRYEKLNELLSDPEVVNDPKKLREYSKEQSDLQETVEVYRRYRSASEQLSDAKAMLEEKLDSDMREMVKEEISELQEEIESLTDQLKVLLIPKDPNDDKNVIMEIRGAAGGEEAALFAGNLYRMYSRYAELQGWKTEVMEANMTGTGGYKEIIFMINGNGAYSRLKYENGAHRVQRVPETESGGRIHTSTATVACLPEAEEVEVDIHEKDIRVDTFASSGPGGQSVNTTMSAVRLTHLPTGVVVSCQDEKSQIKNKEKAMKVLRARIYDKFQQEAQAEYDQNRKSAVGTGDRSERIRTYNFPQNRVTDHRIGLTIQKLDQILEGKLDEVIDALIVEDQASKLQQAES</sequence>
<protein>
    <recommendedName>
        <fullName evidence="1">Peptide chain release factor 1</fullName>
        <shortName evidence="1">RF-1</shortName>
    </recommendedName>
</protein>